<comment type="function">
    <text evidence="1">Together with the chaperonin GroEL, plays an essential role in assisting protein folding. The GroEL-GroES system forms a nano-cage that allows encapsulation of the non-native substrate proteins and provides a physical environment optimized to promote and accelerate protein folding. GroES binds to the apical surface of the GroEL ring, thereby capping the opening of the GroEL channel.</text>
</comment>
<comment type="subunit">
    <text evidence="1">Heptamer of 7 subunits arranged in a ring. Interacts with the chaperonin GroEL.</text>
</comment>
<comment type="subcellular location">
    <subcellularLocation>
        <location evidence="1">Cytoplasm</location>
    </subcellularLocation>
</comment>
<comment type="similarity">
    <text evidence="1">Belongs to the GroES chaperonin family.</text>
</comment>
<evidence type="ECO:0000255" key="1">
    <source>
        <dbReference type="HAMAP-Rule" id="MF_00580"/>
    </source>
</evidence>
<feature type="chain" id="PRO_1000212113" description="Co-chaperonin GroES">
    <location>
        <begin position="1"/>
        <end position="97"/>
    </location>
</feature>
<proteinExistence type="inferred from homology"/>
<dbReference type="EMBL" id="CP001600">
    <property type="protein sequence ID" value="ACR67620.1"/>
    <property type="molecule type" value="Genomic_DNA"/>
</dbReference>
<dbReference type="RefSeq" id="WP_015869826.1">
    <property type="nucleotide sequence ID" value="NZ_CP169062.1"/>
</dbReference>
<dbReference type="SMR" id="C5BDK4"/>
<dbReference type="STRING" id="67780.B6E78_12680"/>
<dbReference type="KEGG" id="eic:NT01EI_0379"/>
<dbReference type="PATRIC" id="fig|634503.3.peg.343"/>
<dbReference type="HOGENOM" id="CLU_132825_1_1_6"/>
<dbReference type="OrthoDB" id="9806791at2"/>
<dbReference type="Proteomes" id="UP000001485">
    <property type="component" value="Chromosome"/>
</dbReference>
<dbReference type="GO" id="GO:0005737">
    <property type="term" value="C:cytoplasm"/>
    <property type="evidence" value="ECO:0007669"/>
    <property type="project" value="UniProtKB-SubCell"/>
</dbReference>
<dbReference type="GO" id="GO:0005524">
    <property type="term" value="F:ATP binding"/>
    <property type="evidence" value="ECO:0007669"/>
    <property type="project" value="InterPro"/>
</dbReference>
<dbReference type="GO" id="GO:0046872">
    <property type="term" value="F:metal ion binding"/>
    <property type="evidence" value="ECO:0007669"/>
    <property type="project" value="TreeGrafter"/>
</dbReference>
<dbReference type="GO" id="GO:0044183">
    <property type="term" value="F:protein folding chaperone"/>
    <property type="evidence" value="ECO:0007669"/>
    <property type="project" value="InterPro"/>
</dbReference>
<dbReference type="GO" id="GO:0051087">
    <property type="term" value="F:protein-folding chaperone binding"/>
    <property type="evidence" value="ECO:0007669"/>
    <property type="project" value="TreeGrafter"/>
</dbReference>
<dbReference type="GO" id="GO:0051082">
    <property type="term" value="F:unfolded protein binding"/>
    <property type="evidence" value="ECO:0007669"/>
    <property type="project" value="TreeGrafter"/>
</dbReference>
<dbReference type="GO" id="GO:0051085">
    <property type="term" value="P:chaperone cofactor-dependent protein refolding"/>
    <property type="evidence" value="ECO:0007669"/>
    <property type="project" value="TreeGrafter"/>
</dbReference>
<dbReference type="CDD" id="cd00320">
    <property type="entry name" value="cpn10"/>
    <property type="match status" value="1"/>
</dbReference>
<dbReference type="FunFam" id="2.30.33.40:FF:000001">
    <property type="entry name" value="10 kDa chaperonin"/>
    <property type="match status" value="1"/>
</dbReference>
<dbReference type="Gene3D" id="2.30.33.40">
    <property type="entry name" value="GroES chaperonin"/>
    <property type="match status" value="1"/>
</dbReference>
<dbReference type="HAMAP" id="MF_00580">
    <property type="entry name" value="CH10"/>
    <property type="match status" value="1"/>
</dbReference>
<dbReference type="InterPro" id="IPR020818">
    <property type="entry name" value="Chaperonin_GroES"/>
</dbReference>
<dbReference type="InterPro" id="IPR037124">
    <property type="entry name" value="Chaperonin_GroES_sf"/>
</dbReference>
<dbReference type="InterPro" id="IPR018369">
    <property type="entry name" value="Chaprnonin_Cpn10_CS"/>
</dbReference>
<dbReference type="InterPro" id="IPR011032">
    <property type="entry name" value="GroES-like_sf"/>
</dbReference>
<dbReference type="NCBIfam" id="NF001526">
    <property type="entry name" value="PRK00364.1-1"/>
    <property type="match status" value="1"/>
</dbReference>
<dbReference type="NCBIfam" id="NF001527">
    <property type="entry name" value="PRK00364.1-2"/>
    <property type="match status" value="1"/>
</dbReference>
<dbReference type="NCBIfam" id="NF001531">
    <property type="entry name" value="PRK00364.2-2"/>
    <property type="match status" value="1"/>
</dbReference>
<dbReference type="PANTHER" id="PTHR10772">
    <property type="entry name" value="10 KDA HEAT SHOCK PROTEIN"/>
    <property type="match status" value="1"/>
</dbReference>
<dbReference type="PANTHER" id="PTHR10772:SF58">
    <property type="entry name" value="CO-CHAPERONIN GROES"/>
    <property type="match status" value="1"/>
</dbReference>
<dbReference type="Pfam" id="PF00166">
    <property type="entry name" value="Cpn10"/>
    <property type="match status" value="1"/>
</dbReference>
<dbReference type="PRINTS" id="PR00297">
    <property type="entry name" value="CHAPERONIN10"/>
</dbReference>
<dbReference type="SMART" id="SM00883">
    <property type="entry name" value="Cpn10"/>
    <property type="match status" value="1"/>
</dbReference>
<dbReference type="SUPFAM" id="SSF50129">
    <property type="entry name" value="GroES-like"/>
    <property type="match status" value="1"/>
</dbReference>
<dbReference type="PROSITE" id="PS00681">
    <property type="entry name" value="CHAPERONINS_CPN10"/>
    <property type="match status" value="1"/>
</dbReference>
<keyword id="KW-0143">Chaperone</keyword>
<keyword id="KW-0963">Cytoplasm</keyword>
<organism>
    <name type="scientific">Edwardsiella ictaluri (strain 93-146)</name>
    <dbReference type="NCBI Taxonomy" id="634503"/>
    <lineage>
        <taxon>Bacteria</taxon>
        <taxon>Pseudomonadati</taxon>
        <taxon>Pseudomonadota</taxon>
        <taxon>Gammaproteobacteria</taxon>
        <taxon>Enterobacterales</taxon>
        <taxon>Hafniaceae</taxon>
        <taxon>Edwardsiella</taxon>
    </lineage>
</organism>
<protein>
    <recommendedName>
        <fullName evidence="1">Co-chaperonin GroES</fullName>
    </recommendedName>
    <alternativeName>
        <fullName evidence="1">10 kDa chaperonin</fullName>
    </alternativeName>
    <alternativeName>
        <fullName evidence="1">Chaperonin-10</fullName>
        <shortName evidence="1">Cpn10</shortName>
    </alternativeName>
</protein>
<accession>C5BDK4</accession>
<sequence length="97" mass="10340">MKIRPLHDRVIVKRKEVESKSAGGIVLTGSAAGKSTRGEVVAVGHGRILENGDVKPLDVKVGDTVIFNDGYGVKAEKIDNEEVLIMSESDILAIVEA</sequence>
<reference key="1">
    <citation type="submission" date="2009-03" db="EMBL/GenBank/DDBJ databases">
        <title>Complete genome sequence of Edwardsiella ictaluri 93-146.</title>
        <authorList>
            <person name="Williams M.L."/>
            <person name="Gillaspy A.F."/>
            <person name="Dyer D.W."/>
            <person name="Thune R.L."/>
            <person name="Waldbieser G.C."/>
            <person name="Schuster S.C."/>
            <person name="Gipson J."/>
            <person name="Zaitshik J."/>
            <person name="Landry C."/>
            <person name="Lawrence M.L."/>
        </authorList>
    </citation>
    <scope>NUCLEOTIDE SEQUENCE [LARGE SCALE GENOMIC DNA]</scope>
    <source>
        <strain>93-146</strain>
    </source>
</reference>
<gene>
    <name evidence="1" type="primary">groES</name>
    <name evidence="1" type="synonym">groS</name>
    <name type="ordered locus">NT01EI_0379</name>
</gene>
<name>CH10_EDWI9</name>